<accession>A8YVZ9</accession>
<comment type="function">
    <text evidence="1">Catalyzes the conversion of dihydroorotate to orotate with fumarate as the electron acceptor.</text>
</comment>
<comment type="catalytic activity">
    <reaction>
        <text>(S)-dihydroorotate + fumarate = orotate + succinate</text>
        <dbReference type="Rhea" id="RHEA:30059"/>
        <dbReference type="ChEBI" id="CHEBI:29806"/>
        <dbReference type="ChEBI" id="CHEBI:30031"/>
        <dbReference type="ChEBI" id="CHEBI:30839"/>
        <dbReference type="ChEBI" id="CHEBI:30864"/>
        <dbReference type="EC" id="1.3.98.1"/>
    </reaction>
</comment>
<comment type="cofactor">
    <cofactor evidence="1">
        <name>FMN</name>
        <dbReference type="ChEBI" id="CHEBI:58210"/>
    </cofactor>
    <text evidence="1">Binds 1 FMN per subunit.</text>
</comment>
<comment type="pathway">
    <text>Pyrimidine metabolism; UMP biosynthesis via de novo pathway.</text>
</comment>
<comment type="subunit">
    <text evidence="1">Homodimer.</text>
</comment>
<comment type="subcellular location">
    <subcellularLocation>
        <location evidence="1">Cytoplasm</location>
    </subcellularLocation>
</comment>
<comment type="similarity">
    <text evidence="2">Belongs to the dihydroorotate dehydrogenase family. Type 1 subfamily.</text>
</comment>
<evidence type="ECO:0000250" key="1"/>
<evidence type="ECO:0000305" key="2"/>
<dbReference type="EC" id="1.3.98.1"/>
<dbReference type="EMBL" id="CP000517">
    <property type="protein sequence ID" value="ABX27900.1"/>
    <property type="molecule type" value="Genomic_DNA"/>
</dbReference>
<dbReference type="RefSeq" id="WP_012212412.1">
    <property type="nucleotide sequence ID" value="NC_010080.1"/>
</dbReference>
<dbReference type="SMR" id="A8YVZ9"/>
<dbReference type="KEGG" id="lhe:lhv_2937"/>
<dbReference type="eggNOG" id="COG0167">
    <property type="taxonomic scope" value="Bacteria"/>
</dbReference>
<dbReference type="HOGENOM" id="CLU_042042_0_0_9"/>
<dbReference type="UniPathway" id="UPA00070"/>
<dbReference type="Proteomes" id="UP000000790">
    <property type="component" value="Chromosome"/>
</dbReference>
<dbReference type="GO" id="GO:0005737">
    <property type="term" value="C:cytoplasm"/>
    <property type="evidence" value="ECO:0007669"/>
    <property type="project" value="UniProtKB-SubCell"/>
</dbReference>
<dbReference type="GO" id="GO:1990663">
    <property type="term" value="F:dihydroorotate dehydrogenase (fumarate) activity"/>
    <property type="evidence" value="ECO:0007669"/>
    <property type="project" value="UniProtKB-EC"/>
</dbReference>
<dbReference type="GO" id="GO:0006207">
    <property type="term" value="P:'de novo' pyrimidine nucleobase biosynthetic process"/>
    <property type="evidence" value="ECO:0007669"/>
    <property type="project" value="InterPro"/>
</dbReference>
<dbReference type="GO" id="GO:0044205">
    <property type="term" value="P:'de novo' UMP biosynthetic process"/>
    <property type="evidence" value="ECO:0007669"/>
    <property type="project" value="UniProtKB-UniRule"/>
</dbReference>
<dbReference type="CDD" id="cd04740">
    <property type="entry name" value="DHOD_1B_like"/>
    <property type="match status" value="1"/>
</dbReference>
<dbReference type="FunFam" id="3.20.20.70:FF:000027">
    <property type="entry name" value="Dihydropyrimidine dehydrogenase [NADP(+)]"/>
    <property type="match status" value="1"/>
</dbReference>
<dbReference type="Gene3D" id="3.20.20.70">
    <property type="entry name" value="Aldolase class I"/>
    <property type="match status" value="1"/>
</dbReference>
<dbReference type="HAMAP" id="MF_00224">
    <property type="entry name" value="DHO_dh_type1"/>
    <property type="match status" value="1"/>
</dbReference>
<dbReference type="InterPro" id="IPR013785">
    <property type="entry name" value="Aldolase_TIM"/>
</dbReference>
<dbReference type="InterPro" id="IPR050074">
    <property type="entry name" value="DHO_dehydrogenase"/>
</dbReference>
<dbReference type="InterPro" id="IPR033888">
    <property type="entry name" value="DHOD_1B"/>
</dbReference>
<dbReference type="InterPro" id="IPR024920">
    <property type="entry name" value="Dihydroorotate_DH_1"/>
</dbReference>
<dbReference type="InterPro" id="IPR012135">
    <property type="entry name" value="Dihydroorotate_DH_1_2"/>
</dbReference>
<dbReference type="InterPro" id="IPR005720">
    <property type="entry name" value="Dihydroorotate_DH_cat"/>
</dbReference>
<dbReference type="InterPro" id="IPR001295">
    <property type="entry name" value="Dihydroorotate_DH_CS"/>
</dbReference>
<dbReference type="InterPro" id="IPR049622">
    <property type="entry name" value="Dihydroorotate_DH_I"/>
</dbReference>
<dbReference type="NCBIfam" id="NF005574">
    <property type="entry name" value="PRK07259.1"/>
    <property type="match status" value="1"/>
</dbReference>
<dbReference type="NCBIfam" id="TIGR01037">
    <property type="entry name" value="pyrD_sub1_fam"/>
    <property type="match status" value="1"/>
</dbReference>
<dbReference type="PANTHER" id="PTHR48109:SF1">
    <property type="entry name" value="DIHYDROOROTATE DEHYDROGENASE (FUMARATE)"/>
    <property type="match status" value="1"/>
</dbReference>
<dbReference type="PANTHER" id="PTHR48109">
    <property type="entry name" value="DIHYDROOROTATE DEHYDROGENASE (QUINONE), MITOCHONDRIAL-RELATED"/>
    <property type="match status" value="1"/>
</dbReference>
<dbReference type="Pfam" id="PF01180">
    <property type="entry name" value="DHO_dh"/>
    <property type="match status" value="1"/>
</dbReference>
<dbReference type="PIRSF" id="PIRSF000164">
    <property type="entry name" value="DHO_oxidase"/>
    <property type="match status" value="1"/>
</dbReference>
<dbReference type="SUPFAM" id="SSF51395">
    <property type="entry name" value="FMN-linked oxidoreductases"/>
    <property type="match status" value="1"/>
</dbReference>
<dbReference type="PROSITE" id="PS00912">
    <property type="entry name" value="DHODEHASE_2"/>
    <property type="match status" value="1"/>
</dbReference>
<organism>
    <name type="scientific">Lactobacillus helveticus (strain DPC 4571)</name>
    <dbReference type="NCBI Taxonomy" id="405566"/>
    <lineage>
        <taxon>Bacteria</taxon>
        <taxon>Bacillati</taxon>
        <taxon>Bacillota</taxon>
        <taxon>Bacilli</taxon>
        <taxon>Lactobacillales</taxon>
        <taxon>Lactobacillaceae</taxon>
        <taxon>Lactobacillus</taxon>
    </lineage>
</organism>
<feature type="chain" id="PRO_1000071763" description="Dihydroorotate dehydrogenase A (fumarate)">
    <location>
        <begin position="1"/>
        <end position="307"/>
    </location>
</feature>
<feature type="active site" description="Nucleophile">
    <location>
        <position position="133"/>
    </location>
</feature>
<feature type="binding site" evidence="1">
    <location>
        <position position="21"/>
    </location>
    <ligand>
        <name>FMN</name>
        <dbReference type="ChEBI" id="CHEBI:58210"/>
    </ligand>
</feature>
<feature type="binding site" evidence="1">
    <location>
        <begin position="46"/>
        <end position="47"/>
    </location>
    <ligand>
        <name>FMN</name>
        <dbReference type="ChEBI" id="CHEBI:58210"/>
    </ligand>
</feature>
<feature type="binding site" evidence="1">
    <location>
        <position position="46"/>
    </location>
    <ligand>
        <name>substrate</name>
    </ligand>
</feature>
<feature type="binding site" evidence="1">
    <location>
        <begin position="70"/>
        <end position="74"/>
    </location>
    <ligand>
        <name>substrate</name>
    </ligand>
</feature>
<feature type="binding site" evidence="1">
    <location>
        <position position="130"/>
    </location>
    <ligand>
        <name>FMN</name>
        <dbReference type="ChEBI" id="CHEBI:58210"/>
    </ligand>
</feature>
<feature type="binding site" evidence="1">
    <location>
        <position position="130"/>
    </location>
    <ligand>
        <name>substrate</name>
    </ligand>
</feature>
<feature type="binding site" evidence="1">
    <location>
        <position position="168"/>
    </location>
    <ligand>
        <name>FMN</name>
        <dbReference type="ChEBI" id="CHEBI:58210"/>
    </ligand>
</feature>
<feature type="binding site" evidence="1">
    <location>
        <position position="194"/>
    </location>
    <ligand>
        <name>FMN</name>
        <dbReference type="ChEBI" id="CHEBI:58210"/>
    </ligand>
</feature>
<feature type="binding site" evidence="1">
    <location>
        <begin position="195"/>
        <end position="196"/>
    </location>
    <ligand>
        <name>substrate</name>
    </ligand>
</feature>
<feature type="binding site" evidence="1">
    <location>
        <position position="220"/>
    </location>
    <ligand>
        <name>FMN</name>
        <dbReference type="ChEBI" id="CHEBI:58210"/>
    </ligand>
</feature>
<feature type="binding site" evidence="1">
    <location>
        <begin position="246"/>
        <end position="247"/>
    </location>
    <ligand>
        <name>FMN</name>
        <dbReference type="ChEBI" id="CHEBI:58210"/>
    </ligand>
</feature>
<feature type="binding site" evidence="1">
    <location>
        <begin position="268"/>
        <end position="269"/>
    </location>
    <ligand>
        <name>FMN</name>
        <dbReference type="ChEBI" id="CHEBI:58210"/>
    </ligand>
</feature>
<sequence length="307" mass="32222">MVNTHVNLPGLDLKNPVMPASGTFGFGDVPAAQKFDLNDLGAMVIKTTTPHATTGNPQPQIAILEDGVLNSVGLTNPGVDQVISEKLTKLRHQYPDLPIMASVGGDSEDDYVEVAKKLSASGLVNALEINVSCPNVAQGGMSFGVHAGVVEELTKKIKMAVALPIYVKLTPNVTDIVEIAKAAESGGADGISMINTLLGMRIDIKTRKPLLGHNMGGLSGEAVKPIAIRMISQVRQVTQLPIIGMGGISTAQDVIEFILAGANAVAVGSAHFEDELAAKHIVEELPAELEKLGVEDINDLVGQVKFN</sequence>
<proteinExistence type="inferred from homology"/>
<protein>
    <recommendedName>
        <fullName>Dihydroorotate dehydrogenase A (fumarate)</fullName>
        <shortName>DHOD A</shortName>
        <shortName>DHODase A</shortName>
        <shortName>DHOdehase A</shortName>
        <ecNumber>1.3.98.1</ecNumber>
    </recommendedName>
</protein>
<keyword id="KW-0963">Cytoplasm</keyword>
<keyword id="KW-0285">Flavoprotein</keyword>
<keyword id="KW-0288">FMN</keyword>
<keyword id="KW-0560">Oxidoreductase</keyword>
<keyword id="KW-0665">Pyrimidine biosynthesis</keyword>
<gene>
    <name type="primary">pyrD</name>
    <name type="ordered locus">lhv_2937</name>
</gene>
<name>PYRDA_LACH4</name>
<reference key="1">
    <citation type="journal article" date="2008" name="J. Bacteriol.">
        <title>Genome sequence of Lactobacillus helveticus: an organism distinguished by selective gene loss and IS element expansion.</title>
        <authorList>
            <person name="Callanan M."/>
            <person name="Kaleta P."/>
            <person name="O'Callaghan J."/>
            <person name="O'Sullivan O."/>
            <person name="Jordan K."/>
            <person name="McAuliffe O."/>
            <person name="Sangrador-Vegas A."/>
            <person name="Slattery L."/>
            <person name="Fitzgerald G.F."/>
            <person name="Beresford T."/>
            <person name="Ross R.P."/>
        </authorList>
    </citation>
    <scope>NUCLEOTIDE SEQUENCE [LARGE SCALE GENOMIC DNA]</scope>
    <source>
        <strain>DPC 4571</strain>
    </source>
</reference>